<gene>
    <name type="primary">RPS2</name>
    <name type="ORF">PB000415.00.0</name>
    <name evidence="4" type="ORF">PBANKA_0510900</name>
</gene>
<reference evidence="5" key="1">
    <citation type="journal article" date="2014" name="BMC Biol.">
        <title>A comprehensive evaluation of rodent malaria parasite genomes and gene expression.</title>
        <authorList>
            <person name="Otto T.D."/>
            <person name="Bohme U."/>
            <person name="Jackson A.P."/>
            <person name="Hunt M."/>
            <person name="Franke-Fayard B."/>
            <person name="Hoeijmakers W.A."/>
            <person name="Religa A.A."/>
            <person name="Robertson L."/>
            <person name="Sanders M."/>
            <person name="Ogun S.A."/>
            <person name="Cunningham D."/>
            <person name="Erhart A."/>
            <person name="Billker O."/>
            <person name="Khan S.M."/>
            <person name="Stunnenberg H.G."/>
            <person name="Langhorne J."/>
            <person name="Holder A.A."/>
            <person name="Waters A.P."/>
            <person name="Newbold C.I."/>
            <person name="Pain A."/>
            <person name="Berriman M."/>
            <person name="Janse C.J."/>
        </authorList>
    </citation>
    <scope>NUCLEOTIDE SEQUENCE [LARGE SCALE GENOMIC DNA]</scope>
    <source>
        <strain evidence="5">ANKA</strain>
    </source>
</reference>
<protein>
    <recommendedName>
        <fullName evidence="1">Small ribosomal subunit protein uS2</fullName>
    </recommendedName>
    <alternativeName>
        <fullName evidence="3">40S ribosomal protein SA</fullName>
    </alternativeName>
</protein>
<comment type="function">
    <text evidence="1">Required for the assembly and/or stability of the 40S ribosomal subunit. Required for the processing of the 20S rRNA-precursor to mature 18S rRNA in a late step of the maturation of 40S ribosomal subunits.</text>
</comment>
<comment type="subunit">
    <text evidence="1">Component of the small ribosomal subunit. Mature ribosomes consist of a small (40S) and a large (60S) subunit. The 40S subunit contains about 33 different proteins and 1 molecule of RNA (18S). The 60S subunit contains about 49 different proteins and 3 molecules of RNA (25S, 5.8S and 5S). Interacts with ribosomal protein S21.</text>
</comment>
<comment type="subcellular location">
    <subcellularLocation>
        <location evidence="1">Cytoplasm</location>
    </subcellularLocation>
</comment>
<comment type="similarity">
    <text evidence="1">Belongs to the universal ribosomal protein uS2 family.</text>
</comment>
<proteinExistence type="inferred from homology"/>
<sequence>MSNKKVQSPKEESIAKMLICKVHIGTKNLENKMKRYVYTRAKDGVHIINLAKTYEKLQLAARVIVAVSNPADVVVVSARPFGSRAVLKFAQYTGAQAIAGRWTPGMLTNQIIQKFIEPRLLIVTDPRTDAQSVKESAYANIPVIALCDSDSPLEHVDIAIPCNNKGKESIALMYWLLAQEVLYLKGSIPRSQAWDVMVDMFLWRDPEQFELKNLANEEAAPTAPHLADNQYATEAPYDDWNKKDDWNDNANEEWKNPITVDEW</sequence>
<feature type="chain" id="PRO_0000371605" description="Small ribosomal subunit protein uS2">
    <location>
        <begin position="1"/>
        <end position="263"/>
    </location>
</feature>
<feature type="region of interest" description="Disordered" evidence="2">
    <location>
        <begin position="237"/>
        <end position="263"/>
    </location>
</feature>
<keyword id="KW-0963">Cytoplasm</keyword>
<keyword id="KW-1185">Reference proteome</keyword>
<keyword id="KW-0687">Ribonucleoprotein</keyword>
<keyword id="KW-0689">Ribosomal protein</keyword>
<dbReference type="EMBL" id="LK023120">
    <property type="protein sequence ID" value="VUC54521.1"/>
    <property type="molecule type" value="Genomic_DNA"/>
</dbReference>
<dbReference type="RefSeq" id="XP_676802.1">
    <property type="nucleotide sequence ID" value="XM_671710.1"/>
</dbReference>
<dbReference type="SMR" id="Q4Z694"/>
<dbReference type="STRING" id="5823.A0A509AGJ2"/>
<dbReference type="VEuPathDB" id="PlasmoDB:PBANKA_0510900"/>
<dbReference type="eggNOG" id="KOG0830">
    <property type="taxonomic scope" value="Eukaryota"/>
</dbReference>
<dbReference type="HOGENOM" id="CLU_058171_2_0_1"/>
<dbReference type="InParanoid" id="A0A509AGJ2"/>
<dbReference type="OMA" id="VKNFFEP"/>
<dbReference type="Proteomes" id="UP000074855">
    <property type="component" value="Chromosome 5"/>
</dbReference>
<dbReference type="GO" id="GO:0022627">
    <property type="term" value="C:cytosolic small ribosomal subunit"/>
    <property type="evidence" value="ECO:0007669"/>
    <property type="project" value="UniProtKB-UniRule"/>
</dbReference>
<dbReference type="GO" id="GO:0003735">
    <property type="term" value="F:structural constituent of ribosome"/>
    <property type="evidence" value="ECO:0007669"/>
    <property type="project" value="UniProtKB-UniRule"/>
</dbReference>
<dbReference type="GO" id="GO:0000028">
    <property type="term" value="P:ribosomal small subunit assembly"/>
    <property type="evidence" value="ECO:0007669"/>
    <property type="project" value="UniProtKB-UniRule"/>
</dbReference>
<dbReference type="GO" id="GO:0006412">
    <property type="term" value="P:translation"/>
    <property type="evidence" value="ECO:0007669"/>
    <property type="project" value="UniProtKB-UniRule"/>
</dbReference>
<dbReference type="CDD" id="cd01425">
    <property type="entry name" value="RPS2"/>
    <property type="match status" value="1"/>
</dbReference>
<dbReference type="FunFam" id="3.40.50.10490:FF:000012">
    <property type="entry name" value="40S ribosomal protein SA"/>
    <property type="match status" value="1"/>
</dbReference>
<dbReference type="Gene3D" id="3.40.50.10490">
    <property type="entry name" value="Glucose-6-phosphate isomerase like protein, domain 1"/>
    <property type="match status" value="1"/>
</dbReference>
<dbReference type="HAMAP" id="MF_03015">
    <property type="entry name" value="Ribosomal_S2_euk"/>
    <property type="match status" value="1"/>
</dbReference>
<dbReference type="InterPro" id="IPR001865">
    <property type="entry name" value="Ribosomal_uS2"/>
</dbReference>
<dbReference type="InterPro" id="IPR018130">
    <property type="entry name" value="Ribosomal_uS2_CS"/>
</dbReference>
<dbReference type="InterPro" id="IPR027498">
    <property type="entry name" value="Ribosomal_uS2_euk"/>
</dbReference>
<dbReference type="InterPro" id="IPR005707">
    <property type="entry name" value="Ribosomal_uS2_euk/arc"/>
</dbReference>
<dbReference type="InterPro" id="IPR023591">
    <property type="entry name" value="Ribosomal_uS2_flav_dom_sf"/>
</dbReference>
<dbReference type="NCBIfam" id="TIGR01012">
    <property type="entry name" value="uS2_euk_arch"/>
    <property type="match status" value="1"/>
</dbReference>
<dbReference type="PANTHER" id="PTHR11489">
    <property type="entry name" value="40S RIBOSOMAL PROTEIN SA"/>
    <property type="match status" value="1"/>
</dbReference>
<dbReference type="Pfam" id="PF00318">
    <property type="entry name" value="Ribosomal_S2"/>
    <property type="match status" value="2"/>
</dbReference>
<dbReference type="PRINTS" id="PR00395">
    <property type="entry name" value="RIBOSOMALS2"/>
</dbReference>
<dbReference type="SUPFAM" id="SSF52313">
    <property type="entry name" value="Ribosomal protein S2"/>
    <property type="match status" value="1"/>
</dbReference>
<dbReference type="PROSITE" id="PS00962">
    <property type="entry name" value="RIBOSOMAL_S2_1"/>
    <property type="match status" value="1"/>
</dbReference>
<dbReference type="PROSITE" id="PS00963">
    <property type="entry name" value="RIBOSOMAL_S2_2"/>
    <property type="match status" value="1"/>
</dbReference>
<accession>Q4Z694</accession>
<accession>A0A509AGJ2</accession>
<name>RSSA_PLABA</name>
<organism>
    <name type="scientific">Plasmodium berghei (strain Anka)</name>
    <dbReference type="NCBI Taxonomy" id="5823"/>
    <lineage>
        <taxon>Eukaryota</taxon>
        <taxon>Sar</taxon>
        <taxon>Alveolata</taxon>
        <taxon>Apicomplexa</taxon>
        <taxon>Aconoidasida</taxon>
        <taxon>Haemosporida</taxon>
        <taxon>Plasmodiidae</taxon>
        <taxon>Plasmodium</taxon>
        <taxon>Plasmodium (Vinckeia)</taxon>
    </lineage>
</organism>
<evidence type="ECO:0000255" key="1">
    <source>
        <dbReference type="HAMAP-Rule" id="MF_03015"/>
    </source>
</evidence>
<evidence type="ECO:0000256" key="2">
    <source>
        <dbReference type="SAM" id="MobiDB-lite"/>
    </source>
</evidence>
<evidence type="ECO:0000305" key="3"/>
<evidence type="ECO:0000312" key="4">
    <source>
        <dbReference type="EMBL" id="VUC54521.1"/>
    </source>
</evidence>
<evidence type="ECO:0000312" key="5">
    <source>
        <dbReference type="Proteomes" id="UP000074855"/>
    </source>
</evidence>